<evidence type="ECO:0000250" key="1">
    <source>
        <dbReference type="UniProtKB" id="Q8J2Q9"/>
    </source>
</evidence>
<evidence type="ECO:0000255" key="2"/>
<evidence type="ECO:0000255" key="3">
    <source>
        <dbReference type="PROSITE-ProRule" id="PRU00282"/>
    </source>
</evidence>
<evidence type="ECO:0000269" key="4">
    <source>
    </source>
</evidence>
<evidence type="ECO:0000269" key="5">
    <source>
    </source>
</evidence>
<evidence type="ECO:0000269" key="6">
    <source>
    </source>
</evidence>
<evidence type="ECO:0000269" key="7">
    <source ref="5"/>
</evidence>
<evidence type="ECO:0000303" key="8">
    <source ref="1"/>
</evidence>
<evidence type="ECO:0000305" key="9"/>
<evidence type="ECO:0000305" key="10">
    <source>
    </source>
</evidence>
<name>ALT9_ALTAL</name>
<keyword id="KW-0472">Membrane</keyword>
<keyword id="KW-0496">Mitochondrion</keyword>
<keyword id="KW-0999">Mitochondrion inner membrane</keyword>
<keyword id="KW-0677">Repeat</keyword>
<keyword id="KW-0812">Transmembrane</keyword>
<keyword id="KW-1133">Transmembrane helix</keyword>
<keyword id="KW-0813">Transport</keyword>
<organism>
    <name type="scientific">Alternaria alternata</name>
    <name type="common">Alternaria rot fungus</name>
    <name type="synonym">Torula alternata</name>
    <dbReference type="NCBI Taxonomy" id="5599"/>
    <lineage>
        <taxon>Eukaryota</taxon>
        <taxon>Fungi</taxon>
        <taxon>Dikarya</taxon>
        <taxon>Ascomycota</taxon>
        <taxon>Pezizomycotina</taxon>
        <taxon>Dothideomycetes</taxon>
        <taxon>Pleosporomycetidae</taxon>
        <taxon>Pleosporales</taxon>
        <taxon>Pleosporineae</taxon>
        <taxon>Pleosporaceae</taxon>
        <taxon>Alternaria</taxon>
        <taxon>Alternaria sect. Alternaria</taxon>
        <taxon>Alternaria alternata complex</taxon>
    </lineage>
</organism>
<accession>A0A3G9HRV8</accession>
<dbReference type="EMBL" id="AB969680">
    <property type="protein sequence ID" value="BBG74273.1"/>
    <property type="molecule type" value="Genomic_DNA"/>
</dbReference>
<dbReference type="SMR" id="A0A3G9HRV8"/>
<dbReference type="VEuPathDB" id="FungiDB:CC77DRAFT_928280"/>
<dbReference type="GO" id="GO:0005743">
    <property type="term" value="C:mitochondrial inner membrane"/>
    <property type="evidence" value="ECO:0007669"/>
    <property type="project" value="UniProtKB-SubCell"/>
</dbReference>
<dbReference type="GO" id="GO:0071913">
    <property type="term" value="F:citrate secondary active transmembrane transporter activity"/>
    <property type="evidence" value="ECO:0007669"/>
    <property type="project" value="TreeGrafter"/>
</dbReference>
<dbReference type="GO" id="GO:0006843">
    <property type="term" value="P:mitochondrial citrate transmembrane transport"/>
    <property type="evidence" value="ECO:0007669"/>
    <property type="project" value="TreeGrafter"/>
</dbReference>
<dbReference type="Gene3D" id="1.50.40.10">
    <property type="entry name" value="Mitochondrial carrier domain"/>
    <property type="match status" value="1"/>
</dbReference>
<dbReference type="InterPro" id="IPR018108">
    <property type="entry name" value="Mitochondrial_sb/sol_carrier"/>
</dbReference>
<dbReference type="InterPro" id="IPR023395">
    <property type="entry name" value="Mt_carrier_dom_sf"/>
</dbReference>
<dbReference type="InterPro" id="IPR049563">
    <property type="entry name" value="TXTP-like"/>
</dbReference>
<dbReference type="PANTHER" id="PTHR45788">
    <property type="entry name" value="SUCCINATE/FUMARATE MITOCHONDRIAL TRANSPORTER-RELATED"/>
    <property type="match status" value="1"/>
</dbReference>
<dbReference type="PANTHER" id="PTHR45788:SF4">
    <property type="entry name" value="TRICARBOXYLATE TRANSPORT PROTEIN, MITOCHONDRIAL"/>
    <property type="match status" value="1"/>
</dbReference>
<dbReference type="Pfam" id="PF00153">
    <property type="entry name" value="Mito_carr"/>
    <property type="match status" value="2"/>
</dbReference>
<dbReference type="SUPFAM" id="SSF103506">
    <property type="entry name" value="Mitochondrial carrier"/>
    <property type="match status" value="1"/>
</dbReference>
<dbReference type="PROSITE" id="PS50920">
    <property type="entry name" value="SOLCAR"/>
    <property type="match status" value="2"/>
</dbReference>
<feature type="chain" id="PRO_0000449861" description="Tricarboxylate transporter ALT9">
    <location>
        <begin position="1"/>
        <end position="215"/>
    </location>
</feature>
<feature type="transmembrane region" description="Helical" evidence="2">
    <location>
        <begin position="19"/>
        <end position="39"/>
    </location>
</feature>
<feature type="transmembrane region" description="Helical" evidence="2">
    <location>
        <begin position="112"/>
        <end position="132"/>
    </location>
</feature>
<feature type="transmembrane region" description="Helical" evidence="2">
    <location>
        <begin position="182"/>
        <end position="202"/>
    </location>
</feature>
<feature type="repeat" description="Solcar 1" evidence="3">
    <location>
        <begin position="18"/>
        <end position="106"/>
    </location>
</feature>
<feature type="repeat" description="Solcar 2" evidence="3">
    <location>
        <begin position="111"/>
        <end position="197"/>
    </location>
</feature>
<protein>
    <recommendedName>
        <fullName evidence="1">Tricarboxylate transporter ALT9</fullName>
    </recommendedName>
    <alternativeName>
        <fullName evidence="8">AAL-toxin biosynthesis cluster protein 9</fullName>
    </alternativeName>
</protein>
<comment type="function">
    <text evidence="4 5 6 7 10">Tricarboxylate transporter; part of the gene cluster that mediates the biosynthesis of the host-selective toxins (HSTs) AAL-toxins, sphinganine-analog mycotoxins responsible for Alternaria stem canker on tomato by the tomato pathotype (PubMed:18435561, PubMed:19449880, PubMed:19749175). The biosynthesis starts with the polyketide synthase ALT1-catalyzed C-16 carbon chain assembly from one starter acetyl-CoA unit with malonyl-CoA extender units (PubMed:18435561, PubMed:19449880). ALT1 also selectively transfers methyl groups at the first and the third cycle of chain elongation for AAL toxin (PubMed:19449880). The C-16 polyketide chain is released from the enzyme by a nucleophilic attack of a carbanion, which is derived from R-carbon of glycin by decarboxylation, on the carbonyl carbon of polyketide acyl chain (Probable). This step is probably catalyzed by a pyridoxal 5'-phosphate-dependent aminoacyl transferase ALT4 (Probable). The respective functions of the other enzymes encoded by the cluster have still to be elucidated (Probable). The sphingosine N-acyltransferase-like protein ALT7 seems not to act as a resistance/self-tolerance factor against the toxin in the toxin biosynthetic gene cluster, contrary to what is expected (Ref.5).</text>
</comment>
<comment type="pathway">
    <text evidence="1">Mycotoxin biosynthesis.</text>
</comment>
<comment type="subcellular location">
    <subcellularLocation>
        <location evidence="9">Mitochondrion inner membrane</location>
        <topology evidence="2">Multi-pass membrane protein</topology>
    </subcellularLocation>
</comment>
<comment type="miscellaneous">
    <text evidence="6">Gene clusters encoding host-selective toxins (HSTs) are localized on conditionally dispensable chromosomes (CDCs), also called supernumerary chromosomes, where they are present in multiple copies. The CDCs are not essential for saprophytic growth but controls host-selective pathogenicity.</text>
</comment>
<comment type="similarity">
    <text evidence="9">Belongs to the mitochondrial carrier (TC 2.A.29) family.</text>
</comment>
<reference key="1">
    <citation type="submission" date="2014-06" db="EMBL/GenBank/DDBJ databases">
        <title>AAL-toxin biosynthetic genes cluster in the tomato pathotype of Alternaria alternata.</title>
        <authorList>
            <person name="Akagi Y."/>
            <person name="Akamatsu H."/>
            <person name="Takao K."/>
            <person name="Tsuge T."/>
            <person name="Kodama M."/>
        </authorList>
    </citation>
    <scope>NUCLEOTIDE SEQUENCE [GENOMIC DNA]</scope>
    <source>
        <strain>As-27</strain>
    </source>
</reference>
<reference key="2">
    <citation type="journal article" date="2008" name="J. Nat. Prod.">
        <title>Functional complementation of fumonisin biosynthesis in FUM1-disrupted fusarium verticillioides by the AAL-toxin polyketide synthase gene ALT1 from Alternaria alternata f. sp. Lycopersici.</title>
        <authorList>
            <person name="Zhu X."/>
            <person name="Vogeler C."/>
            <person name="Du L."/>
        </authorList>
    </citation>
    <scope>FUNCTION</scope>
</reference>
<reference key="3">
    <citation type="journal article" date="2009" name="Eukaryot. Cell">
        <title>Horizontal chromosome transfer, a mechanism for the evolution and differentiation of a plant-pathogenic fungus.</title>
        <authorList>
            <person name="Akagi Y."/>
            <person name="Akamatsu H."/>
            <person name="Otani H."/>
            <person name="Kodama M."/>
        </authorList>
    </citation>
    <scope>FUNCTION</scope>
</reference>
<reference key="4">
    <citation type="journal article" date="2009" name="J. Nat. Prod.">
        <title>Introduction of the AAL-toxin polyketide synthase gene ALT1 into FUM1-disrupted Fusarium verticillioides produces metabolites with the fumonisin methylation pattern.</title>
        <authorList>
            <person name="Li Y."/>
            <person name="Shen Y."/>
            <person name="Zhu X."/>
            <person name="Du L."/>
        </authorList>
    </citation>
    <scope>FUNCTION</scope>
</reference>
<reference key="5">
    <citation type="journal article" date="2012" name="J. Plant Pathol. Microbiol.">
        <title>Functional analysis of the ceramide synthase gene ALT7, a homolog of the disease resistance gene Asc1, in the plant pathogen Alternaria alternata.</title>
        <authorList>
            <person name="Kheder A.A."/>
            <person name="Akagi Y."/>
            <person name="Tsuge T."/>
            <person name="Kodama M."/>
        </authorList>
    </citation>
    <scope>FUNCTION</scope>
</reference>
<proteinExistence type="inferred from homology"/>
<sequence>MTFDYARRYMPEDQTGKTTVVGNMVAGMCAGVAESVLVLTPGENLKTRLIDDRAGARLYQSSTHAIRTIVTKDGASTFFRGVLPVTLKQSNSSMVRFTSYNQLAPMLQPTCGVSTSVVAGALAGVITVYCTMPFDNVKTQMQSLDGSRIYSSSWDCAKKLVVNGGPRRLWKGTTPRLLRLSVAGAIAFTLYEEVVRLTGFLVLPKVAAKAPKDAA</sequence>
<gene>
    <name evidence="8" type="primary">ALT9</name>
</gene>